<name>MSRA_XYLFT</name>
<organism>
    <name type="scientific">Xylella fastidiosa (strain Temecula1 / ATCC 700964)</name>
    <dbReference type="NCBI Taxonomy" id="183190"/>
    <lineage>
        <taxon>Bacteria</taxon>
        <taxon>Pseudomonadati</taxon>
        <taxon>Pseudomonadota</taxon>
        <taxon>Gammaproteobacteria</taxon>
        <taxon>Lysobacterales</taxon>
        <taxon>Lysobacteraceae</taxon>
        <taxon>Xylella</taxon>
    </lineage>
</organism>
<sequence length="216" mass="23858">MVMTIEALKHLGRVDESRVGRTEPLPLDNRHYVNGHPLCDSFPGLALIQFGLGCFWGAERLFWQLPGVFSTAAGYAGGGVPYPTYREVCSGETGHAEVVLVVYDHTVISFEQLLQTFWESHDPTQGMRQGNDIGTQYRSVIHCTTSEQYAAASASREVYQQQLNTAGYTAITTEILHPAPPFYYAENEHQQYLAKHPNGYCGLGGTGVTCAIRLQV</sequence>
<dbReference type="EC" id="1.8.4.11" evidence="1"/>
<dbReference type="EMBL" id="AE009442">
    <property type="protein sequence ID" value="AAO28727.1"/>
    <property type="molecule type" value="Genomic_DNA"/>
</dbReference>
<dbReference type="RefSeq" id="WP_011097820.1">
    <property type="nucleotide sequence ID" value="NC_004556.1"/>
</dbReference>
<dbReference type="SMR" id="Q87D27"/>
<dbReference type="GeneID" id="93904645"/>
<dbReference type="KEGG" id="xft:PD_0859"/>
<dbReference type="HOGENOM" id="CLU_031040_10_3_6"/>
<dbReference type="Proteomes" id="UP000002516">
    <property type="component" value="Chromosome"/>
</dbReference>
<dbReference type="GO" id="GO:0005737">
    <property type="term" value="C:cytoplasm"/>
    <property type="evidence" value="ECO:0007669"/>
    <property type="project" value="TreeGrafter"/>
</dbReference>
<dbReference type="GO" id="GO:0036456">
    <property type="term" value="F:L-methionine-(S)-S-oxide reductase activity"/>
    <property type="evidence" value="ECO:0007669"/>
    <property type="project" value="TreeGrafter"/>
</dbReference>
<dbReference type="GO" id="GO:0008113">
    <property type="term" value="F:peptide-methionine (S)-S-oxide reductase activity"/>
    <property type="evidence" value="ECO:0007669"/>
    <property type="project" value="UniProtKB-UniRule"/>
</dbReference>
<dbReference type="GO" id="GO:0034599">
    <property type="term" value="P:cellular response to oxidative stress"/>
    <property type="evidence" value="ECO:0007669"/>
    <property type="project" value="TreeGrafter"/>
</dbReference>
<dbReference type="GO" id="GO:0036211">
    <property type="term" value="P:protein modification process"/>
    <property type="evidence" value="ECO:0007669"/>
    <property type="project" value="UniProtKB-UniRule"/>
</dbReference>
<dbReference type="FunFam" id="3.30.1060.10:FF:000001">
    <property type="entry name" value="Peptide methionine sulfoxide reductase MsrA"/>
    <property type="match status" value="1"/>
</dbReference>
<dbReference type="Gene3D" id="3.30.1060.10">
    <property type="entry name" value="Peptide methionine sulphoxide reductase MsrA"/>
    <property type="match status" value="1"/>
</dbReference>
<dbReference type="HAMAP" id="MF_01401">
    <property type="entry name" value="MsrA"/>
    <property type="match status" value="1"/>
</dbReference>
<dbReference type="InterPro" id="IPR002569">
    <property type="entry name" value="Met_Sox_Rdtase_MsrA_dom"/>
</dbReference>
<dbReference type="InterPro" id="IPR036509">
    <property type="entry name" value="Met_Sox_Rdtase_MsrA_sf"/>
</dbReference>
<dbReference type="InterPro" id="IPR050162">
    <property type="entry name" value="MsrA_MetSO_reductase"/>
</dbReference>
<dbReference type="NCBIfam" id="TIGR00401">
    <property type="entry name" value="msrA"/>
    <property type="match status" value="1"/>
</dbReference>
<dbReference type="PANTHER" id="PTHR42799">
    <property type="entry name" value="MITOCHONDRIAL PEPTIDE METHIONINE SULFOXIDE REDUCTASE"/>
    <property type="match status" value="1"/>
</dbReference>
<dbReference type="PANTHER" id="PTHR42799:SF2">
    <property type="entry name" value="MITOCHONDRIAL PEPTIDE METHIONINE SULFOXIDE REDUCTASE"/>
    <property type="match status" value="1"/>
</dbReference>
<dbReference type="Pfam" id="PF01625">
    <property type="entry name" value="PMSR"/>
    <property type="match status" value="1"/>
</dbReference>
<dbReference type="SUPFAM" id="SSF55068">
    <property type="entry name" value="Peptide methionine sulfoxide reductase"/>
    <property type="match status" value="1"/>
</dbReference>
<gene>
    <name evidence="1" type="primary">msrA</name>
    <name type="ordered locus">PD_0859</name>
</gene>
<protein>
    <recommendedName>
        <fullName evidence="1">Peptide methionine sulfoxide reductase MsrA</fullName>
        <shortName evidence="1">Protein-methionine-S-oxide reductase</shortName>
        <ecNumber evidence="1">1.8.4.11</ecNumber>
    </recommendedName>
    <alternativeName>
        <fullName evidence="1">Peptide-methionine (S)-S-oxide reductase</fullName>
        <shortName evidence="1">Peptide Met(O) reductase</shortName>
    </alternativeName>
</protein>
<accession>Q87D27</accession>
<reference key="1">
    <citation type="journal article" date="2003" name="J. Bacteriol.">
        <title>Comparative analyses of the complete genome sequences of Pierce's disease and citrus variegated chlorosis strains of Xylella fastidiosa.</title>
        <authorList>
            <person name="Van Sluys M.A."/>
            <person name="de Oliveira M.C."/>
            <person name="Monteiro-Vitorello C.B."/>
            <person name="Miyaki C.Y."/>
            <person name="Furlan L.R."/>
            <person name="Camargo L.E.A."/>
            <person name="da Silva A.C.R."/>
            <person name="Moon D.H."/>
            <person name="Takita M.A."/>
            <person name="Lemos E.G.M."/>
            <person name="Machado M.A."/>
            <person name="Ferro M.I.T."/>
            <person name="da Silva F.R."/>
            <person name="Goldman M.H.S."/>
            <person name="Goldman G.H."/>
            <person name="Lemos M.V.F."/>
            <person name="El-Dorry H."/>
            <person name="Tsai S.M."/>
            <person name="Carrer H."/>
            <person name="Carraro D.M."/>
            <person name="de Oliveira R.C."/>
            <person name="Nunes L.R."/>
            <person name="Siqueira W.J."/>
            <person name="Coutinho L.L."/>
            <person name="Kimura E.T."/>
            <person name="Ferro E.S."/>
            <person name="Harakava R."/>
            <person name="Kuramae E.E."/>
            <person name="Marino C.L."/>
            <person name="Giglioti E."/>
            <person name="Abreu I.L."/>
            <person name="Alves L.M.C."/>
            <person name="do Amaral A.M."/>
            <person name="Baia G.S."/>
            <person name="Blanco S.R."/>
            <person name="Brito M.S."/>
            <person name="Cannavan F.S."/>
            <person name="Celestino A.V."/>
            <person name="da Cunha A.F."/>
            <person name="Fenille R.C."/>
            <person name="Ferro J.A."/>
            <person name="Formighieri E.F."/>
            <person name="Kishi L.T."/>
            <person name="Leoni S.G."/>
            <person name="Oliveira A.R."/>
            <person name="Rosa V.E. Jr."/>
            <person name="Sassaki F.T."/>
            <person name="Sena J.A.D."/>
            <person name="de Souza A.A."/>
            <person name="Truffi D."/>
            <person name="Tsukumo F."/>
            <person name="Yanai G.M."/>
            <person name="Zaros L.G."/>
            <person name="Civerolo E.L."/>
            <person name="Simpson A.J.G."/>
            <person name="Almeida N.F. Jr."/>
            <person name="Setubal J.C."/>
            <person name="Kitajima J.P."/>
        </authorList>
    </citation>
    <scope>NUCLEOTIDE SEQUENCE [LARGE SCALE GENOMIC DNA]</scope>
    <source>
        <strain>Temecula1 / ATCC 700964</strain>
    </source>
</reference>
<comment type="function">
    <text evidence="1">Has an important function as a repair enzyme for proteins that have been inactivated by oxidation. Catalyzes the reversible oxidation-reduction of methionine sulfoxide in proteins to methionine.</text>
</comment>
<comment type="catalytic activity">
    <reaction evidence="1">
        <text>L-methionyl-[protein] + [thioredoxin]-disulfide + H2O = L-methionyl-(S)-S-oxide-[protein] + [thioredoxin]-dithiol</text>
        <dbReference type="Rhea" id="RHEA:14217"/>
        <dbReference type="Rhea" id="RHEA-COMP:10698"/>
        <dbReference type="Rhea" id="RHEA-COMP:10700"/>
        <dbReference type="Rhea" id="RHEA-COMP:12313"/>
        <dbReference type="Rhea" id="RHEA-COMP:12315"/>
        <dbReference type="ChEBI" id="CHEBI:15377"/>
        <dbReference type="ChEBI" id="CHEBI:16044"/>
        <dbReference type="ChEBI" id="CHEBI:29950"/>
        <dbReference type="ChEBI" id="CHEBI:44120"/>
        <dbReference type="ChEBI" id="CHEBI:50058"/>
        <dbReference type="EC" id="1.8.4.11"/>
    </reaction>
</comment>
<comment type="catalytic activity">
    <reaction evidence="1">
        <text>[thioredoxin]-disulfide + L-methionine + H2O = L-methionine (S)-S-oxide + [thioredoxin]-dithiol</text>
        <dbReference type="Rhea" id="RHEA:19993"/>
        <dbReference type="Rhea" id="RHEA-COMP:10698"/>
        <dbReference type="Rhea" id="RHEA-COMP:10700"/>
        <dbReference type="ChEBI" id="CHEBI:15377"/>
        <dbReference type="ChEBI" id="CHEBI:29950"/>
        <dbReference type="ChEBI" id="CHEBI:50058"/>
        <dbReference type="ChEBI" id="CHEBI:57844"/>
        <dbReference type="ChEBI" id="CHEBI:58772"/>
        <dbReference type="EC" id="1.8.4.11"/>
    </reaction>
</comment>
<comment type="similarity">
    <text evidence="1">Belongs to the MsrA Met sulfoxide reductase family.</text>
</comment>
<feature type="chain" id="PRO_0000138614" description="Peptide methionine sulfoxide reductase MsrA">
    <location>
        <begin position="1"/>
        <end position="216"/>
    </location>
</feature>
<feature type="active site" evidence="1">
    <location>
        <position position="54"/>
    </location>
</feature>
<proteinExistence type="inferred from homology"/>
<evidence type="ECO:0000255" key="1">
    <source>
        <dbReference type="HAMAP-Rule" id="MF_01401"/>
    </source>
</evidence>
<keyword id="KW-0560">Oxidoreductase</keyword>
<keyword id="KW-1185">Reference proteome</keyword>